<geneLocation type="plasmid">
    <name>pEA3</name>
</geneLocation>
<keyword id="KW-0010">Activator</keyword>
<keyword id="KW-0067">ATP-binding</keyword>
<keyword id="KW-0238">DNA-binding</keyword>
<keyword id="KW-0535">Nitrogen fixation</keyword>
<keyword id="KW-0547">Nucleotide-binding</keyword>
<keyword id="KW-0614">Plasmid</keyword>
<keyword id="KW-0804">Transcription</keyword>
<keyword id="KW-0805">Transcription regulation</keyword>
<keyword id="KW-0902">Two-component regulatory system</keyword>
<dbReference type="EMBL" id="X89104">
    <property type="protein sequence ID" value="CAA61477.1"/>
    <property type="molecule type" value="Genomic_DNA"/>
</dbReference>
<dbReference type="EMBL" id="X99694">
    <property type="protein sequence ID" value="CAA68007.1"/>
    <property type="molecule type" value="Genomic_DNA"/>
</dbReference>
<dbReference type="PIR" id="S60176">
    <property type="entry name" value="S60176"/>
</dbReference>
<dbReference type="SMR" id="P54930"/>
<dbReference type="GO" id="GO:0005524">
    <property type="term" value="F:ATP binding"/>
    <property type="evidence" value="ECO:0007669"/>
    <property type="project" value="UniProtKB-KW"/>
</dbReference>
<dbReference type="GO" id="GO:0016887">
    <property type="term" value="F:ATP hydrolysis activity"/>
    <property type="evidence" value="ECO:0007669"/>
    <property type="project" value="InterPro"/>
</dbReference>
<dbReference type="GO" id="GO:0003700">
    <property type="term" value="F:DNA-binding transcription factor activity"/>
    <property type="evidence" value="ECO:0007669"/>
    <property type="project" value="InterPro"/>
</dbReference>
<dbReference type="GO" id="GO:0043565">
    <property type="term" value="F:sequence-specific DNA binding"/>
    <property type="evidence" value="ECO:0007669"/>
    <property type="project" value="InterPro"/>
</dbReference>
<dbReference type="GO" id="GO:0009399">
    <property type="term" value="P:nitrogen fixation"/>
    <property type="evidence" value="ECO:0007669"/>
    <property type="project" value="UniProtKB-KW"/>
</dbReference>
<dbReference type="GO" id="GO:0000160">
    <property type="term" value="P:phosphorelay signal transduction system"/>
    <property type="evidence" value="ECO:0007669"/>
    <property type="project" value="UniProtKB-KW"/>
</dbReference>
<dbReference type="CDD" id="cd00009">
    <property type="entry name" value="AAA"/>
    <property type="match status" value="1"/>
</dbReference>
<dbReference type="FunFam" id="3.40.50.300:FF:000006">
    <property type="entry name" value="DNA-binding transcriptional regulator NtrC"/>
    <property type="match status" value="1"/>
</dbReference>
<dbReference type="Gene3D" id="1.10.8.60">
    <property type="match status" value="1"/>
</dbReference>
<dbReference type="Gene3D" id="3.30.450.40">
    <property type="match status" value="1"/>
</dbReference>
<dbReference type="Gene3D" id="1.10.10.60">
    <property type="entry name" value="Homeodomain-like"/>
    <property type="match status" value="1"/>
</dbReference>
<dbReference type="Gene3D" id="3.40.50.300">
    <property type="entry name" value="P-loop containing nucleotide triphosphate hydrolases"/>
    <property type="match status" value="1"/>
</dbReference>
<dbReference type="InterPro" id="IPR003593">
    <property type="entry name" value="AAA+_ATPase"/>
</dbReference>
<dbReference type="InterPro" id="IPR003018">
    <property type="entry name" value="GAF"/>
</dbReference>
<dbReference type="InterPro" id="IPR029016">
    <property type="entry name" value="GAF-like_dom_sf"/>
</dbReference>
<dbReference type="InterPro" id="IPR009057">
    <property type="entry name" value="Homeodomain-like_sf"/>
</dbReference>
<dbReference type="InterPro" id="IPR002197">
    <property type="entry name" value="HTH_Fis"/>
</dbReference>
<dbReference type="InterPro" id="IPR010113">
    <property type="entry name" value="Nif-specific_regulatory_prot"/>
</dbReference>
<dbReference type="InterPro" id="IPR027417">
    <property type="entry name" value="P-loop_NTPase"/>
</dbReference>
<dbReference type="InterPro" id="IPR002078">
    <property type="entry name" value="Sigma_54_int"/>
</dbReference>
<dbReference type="InterPro" id="IPR025662">
    <property type="entry name" value="Sigma_54_int_dom_ATP-bd_1"/>
</dbReference>
<dbReference type="InterPro" id="IPR025943">
    <property type="entry name" value="Sigma_54_int_dom_ATP-bd_2"/>
</dbReference>
<dbReference type="InterPro" id="IPR025944">
    <property type="entry name" value="Sigma_54_int_dom_CS"/>
</dbReference>
<dbReference type="NCBIfam" id="TIGR01817">
    <property type="entry name" value="nifA"/>
    <property type="match status" value="1"/>
</dbReference>
<dbReference type="PANTHER" id="PTHR32071:SF117">
    <property type="entry name" value="PTS-DEPENDENT DIHYDROXYACETONE KINASE OPERON REGULATORY PROTEIN-RELATED"/>
    <property type="match status" value="1"/>
</dbReference>
<dbReference type="PANTHER" id="PTHR32071">
    <property type="entry name" value="TRANSCRIPTIONAL REGULATORY PROTEIN"/>
    <property type="match status" value="1"/>
</dbReference>
<dbReference type="Pfam" id="PF02954">
    <property type="entry name" value="HTH_8"/>
    <property type="match status" value="1"/>
</dbReference>
<dbReference type="Pfam" id="PF00158">
    <property type="entry name" value="Sigma54_activat"/>
    <property type="match status" value="1"/>
</dbReference>
<dbReference type="PRINTS" id="PR01590">
    <property type="entry name" value="HTHFIS"/>
</dbReference>
<dbReference type="SMART" id="SM00382">
    <property type="entry name" value="AAA"/>
    <property type="match status" value="1"/>
</dbReference>
<dbReference type="SMART" id="SM00065">
    <property type="entry name" value="GAF"/>
    <property type="match status" value="1"/>
</dbReference>
<dbReference type="SUPFAM" id="SSF55781">
    <property type="entry name" value="GAF domain-like"/>
    <property type="match status" value="1"/>
</dbReference>
<dbReference type="SUPFAM" id="SSF46689">
    <property type="entry name" value="Homeodomain-like"/>
    <property type="match status" value="1"/>
</dbReference>
<dbReference type="SUPFAM" id="SSF52540">
    <property type="entry name" value="P-loop containing nucleoside triphosphate hydrolases"/>
    <property type="match status" value="1"/>
</dbReference>
<dbReference type="PROSITE" id="PS00675">
    <property type="entry name" value="SIGMA54_INTERACT_1"/>
    <property type="match status" value="1"/>
</dbReference>
<dbReference type="PROSITE" id="PS00676">
    <property type="entry name" value="SIGMA54_INTERACT_2"/>
    <property type="match status" value="1"/>
</dbReference>
<dbReference type="PROSITE" id="PS00688">
    <property type="entry name" value="SIGMA54_INTERACT_3"/>
    <property type="match status" value="1"/>
</dbReference>
<dbReference type="PROSITE" id="PS50045">
    <property type="entry name" value="SIGMA54_INTERACT_4"/>
    <property type="match status" value="1"/>
</dbReference>
<proteinExistence type="predicted"/>
<name>NIFA_ENTAG</name>
<protein>
    <recommendedName>
        <fullName>Nif-specific regulatory protein</fullName>
    </recommendedName>
</protein>
<accession>P54930</accession>
<reference key="1">
    <citation type="journal article" date="1995" name="Mol. Gen. Genet.">
        <title>Regulation of nif gene expression in Enterobacter agglomerans: nucleotide sequence of the nifLA operon and influence of temperature and ammonium on its transcription.</title>
        <authorList>
            <person name="Siddavattam D."/>
            <person name="Steibl H.D."/>
            <person name="Kreutzer R."/>
            <person name="Klingmueller W."/>
        </authorList>
    </citation>
    <scope>NUCLEOTIDE SEQUENCE [GENOMIC DNA]</scope>
    <source>
        <strain>333</strain>
    </source>
</reference>
<organism>
    <name type="scientific">Enterobacter agglomerans</name>
    <name type="common">Erwinia herbicola</name>
    <name type="synonym">Pantoea agglomerans</name>
    <dbReference type="NCBI Taxonomy" id="549"/>
    <lineage>
        <taxon>Bacteria</taxon>
        <taxon>Pseudomonadati</taxon>
        <taxon>Pseudomonadota</taxon>
        <taxon>Gammaproteobacteria</taxon>
        <taxon>Enterobacterales</taxon>
        <taxon>Erwiniaceae</taxon>
        <taxon>Pantoea</taxon>
        <taxon>Pantoea agglomerans group</taxon>
    </lineage>
</organism>
<gene>
    <name type="primary">nifA</name>
</gene>
<feature type="chain" id="PRO_0000081306" description="Nif-specific regulatory protein">
    <location>
        <begin position="1"/>
        <end position="518"/>
    </location>
</feature>
<feature type="domain" description="GAF">
    <location>
        <begin position="35"/>
        <end position="176"/>
    </location>
</feature>
<feature type="domain" description="Sigma-54 factor interaction" evidence="2">
    <location>
        <begin position="205"/>
        <end position="432"/>
    </location>
</feature>
<feature type="DNA-binding region" description="H-T-H motif" evidence="1">
    <location>
        <begin position="490"/>
        <end position="509"/>
    </location>
</feature>
<feature type="region of interest" description="Inter-domain linker">
    <location>
        <begin position="433"/>
        <end position="475"/>
    </location>
</feature>
<feature type="region of interest" description="C-terminal DNA-binding domain">
    <location>
        <begin position="476"/>
        <end position="518"/>
    </location>
</feature>
<feature type="binding site" evidence="2">
    <location>
        <begin position="232"/>
        <end position="239"/>
    </location>
    <ligand>
        <name>ATP</name>
        <dbReference type="ChEBI" id="CHEBI:30616"/>
    </ligand>
</feature>
<feature type="binding site" evidence="2">
    <location>
        <begin position="295"/>
        <end position="304"/>
    </location>
    <ligand>
        <name>ATP</name>
        <dbReference type="ChEBI" id="CHEBI:30616"/>
    </ligand>
</feature>
<comment type="function">
    <text>Required for activation of most nif operons, which are directly involved in nitrogen fixation.</text>
</comment>
<comment type="subunit">
    <text>Interacts with sigma-54.</text>
</comment>
<sequence>MTQLPTAGPVIRRFDMSAQFTALYRISVALSQESNTARALAAILEVLHDHAFMQYGMVCLFDKERNALFVESLHGIDGERKKETRHVRYRMGEGVIGAVMSQRQALVLPRISDDQRFLDRLNIYDYSLPLIGVPIPGADNQPAGVLVAQPMALHEDRLAASTRFLEMVANLISQPLRSATPPESLPAQTPVRCSVPRQFGFEQMVGKSQAMRQTMDILRQVSKWDTTVLVRGESGTGKELIANAIHYNSPRAAAPFVKFNCAALPDNLLESELFGHEKGAFTGAIRTRKGRFELADGGTLFLDEIGESSASFQAKLLRILQEGEMERVGGDTTLKVDVRIIAATNRNLEEEVRAGNFREDLYYRLNVMPVSLPALRERLDDIADLAPFLVKKIALRQGRELRISDGAVRLLMTYSWPGNVRELENCLERASVMTDEGLIDRDVILFNHHESPALSVKPGLPLATDESWLDQELDERQRVIAALEKTGWVQAKAARLLGMTPRQIAYRIQIMDINMHRI</sequence>
<evidence type="ECO:0000250" key="1"/>
<evidence type="ECO:0000255" key="2">
    <source>
        <dbReference type="PROSITE-ProRule" id="PRU00193"/>
    </source>
</evidence>